<proteinExistence type="inferred from homology"/>
<gene>
    <name evidence="1" type="primary">pxpA</name>
    <name type="ordered locus">SAB1476c</name>
</gene>
<protein>
    <recommendedName>
        <fullName evidence="1">5-oxoprolinase subunit A</fullName>
        <shortName evidence="1">5-OPase subunit A</shortName>
        <ecNumber evidence="1">3.5.2.9</ecNumber>
    </recommendedName>
    <alternativeName>
        <fullName evidence="1">5-oxoprolinase (ATP-hydrolyzing) subunit A</fullName>
    </alternativeName>
</protein>
<sequence>MRVDLNCDLGEAFGNYSFGGDHQIIPLITSANVACGFHAGDENVMNETVKLAKAHNVAVGAHPGLPDLKGFGRRNIDISNEEIYNLMIYQLGALQGFCRIHQVKINHVKPHGALYQMGAKDREIASVIAQAVYDFDPSLVLVGLANSYLISEAKNVGLITASEVFADRRYEDDGQLVSRKESDAVITDTDEALKQVLKMVKENKVISKNNKEVTLQADTICVHGDGEHALLFVSKIREILMKEGIDIQSL</sequence>
<reference key="1">
    <citation type="journal article" date="2007" name="PLoS ONE">
        <title>Molecular correlates of host specialization in Staphylococcus aureus.</title>
        <authorList>
            <person name="Herron-Olson L."/>
            <person name="Fitzgerald J.R."/>
            <person name="Musser J.M."/>
            <person name="Kapur V."/>
        </authorList>
    </citation>
    <scope>NUCLEOTIDE SEQUENCE [LARGE SCALE GENOMIC DNA]</scope>
    <source>
        <strain>bovine RF122 / ET3-1</strain>
    </source>
</reference>
<accession>Q2YT73</accession>
<dbReference type="EC" id="3.5.2.9" evidence="1"/>
<dbReference type="EMBL" id="AJ938182">
    <property type="protein sequence ID" value="CAI81165.1"/>
    <property type="molecule type" value="Genomic_DNA"/>
</dbReference>
<dbReference type="RefSeq" id="WP_001261800.1">
    <property type="nucleotide sequence ID" value="NC_007622.1"/>
</dbReference>
<dbReference type="SMR" id="Q2YT73"/>
<dbReference type="KEGG" id="sab:SAB1476c"/>
<dbReference type="HOGENOM" id="CLU_069535_0_0_9"/>
<dbReference type="GO" id="GO:0017168">
    <property type="term" value="F:5-oxoprolinase (ATP-hydrolyzing) activity"/>
    <property type="evidence" value="ECO:0007669"/>
    <property type="project" value="UniProtKB-UniRule"/>
</dbReference>
<dbReference type="GO" id="GO:0005524">
    <property type="term" value="F:ATP binding"/>
    <property type="evidence" value="ECO:0007669"/>
    <property type="project" value="UniProtKB-UniRule"/>
</dbReference>
<dbReference type="GO" id="GO:0005975">
    <property type="term" value="P:carbohydrate metabolic process"/>
    <property type="evidence" value="ECO:0007669"/>
    <property type="project" value="InterPro"/>
</dbReference>
<dbReference type="CDD" id="cd10787">
    <property type="entry name" value="LamB_YcsF_like"/>
    <property type="match status" value="1"/>
</dbReference>
<dbReference type="Gene3D" id="3.20.20.370">
    <property type="entry name" value="Glycoside hydrolase/deacetylase"/>
    <property type="match status" value="1"/>
</dbReference>
<dbReference type="HAMAP" id="MF_00691">
    <property type="entry name" value="PxpA"/>
    <property type="match status" value="1"/>
</dbReference>
<dbReference type="InterPro" id="IPR011330">
    <property type="entry name" value="Glyco_hydro/deAcase_b/a-brl"/>
</dbReference>
<dbReference type="InterPro" id="IPR005501">
    <property type="entry name" value="LamB/YcsF/PxpA-like"/>
</dbReference>
<dbReference type="NCBIfam" id="NF003813">
    <property type="entry name" value="PRK05406.1-2"/>
    <property type="match status" value="1"/>
</dbReference>
<dbReference type="NCBIfam" id="NF003814">
    <property type="entry name" value="PRK05406.1-3"/>
    <property type="match status" value="1"/>
</dbReference>
<dbReference type="NCBIfam" id="NF003816">
    <property type="entry name" value="PRK05406.1-5"/>
    <property type="match status" value="1"/>
</dbReference>
<dbReference type="PANTHER" id="PTHR30292:SF0">
    <property type="entry name" value="5-OXOPROLINASE SUBUNIT A"/>
    <property type="match status" value="1"/>
</dbReference>
<dbReference type="PANTHER" id="PTHR30292">
    <property type="entry name" value="UNCHARACTERIZED PROTEIN YBGL-RELATED"/>
    <property type="match status" value="1"/>
</dbReference>
<dbReference type="Pfam" id="PF03746">
    <property type="entry name" value="LamB_YcsF"/>
    <property type="match status" value="1"/>
</dbReference>
<dbReference type="SUPFAM" id="SSF88713">
    <property type="entry name" value="Glycoside hydrolase/deacetylase"/>
    <property type="match status" value="1"/>
</dbReference>
<name>PXPA_STAAB</name>
<evidence type="ECO:0000255" key="1">
    <source>
        <dbReference type="HAMAP-Rule" id="MF_00691"/>
    </source>
</evidence>
<feature type="chain" id="PRO_1000045228" description="5-oxoprolinase subunit A">
    <location>
        <begin position="1"/>
        <end position="250"/>
    </location>
</feature>
<keyword id="KW-0067">ATP-binding</keyword>
<keyword id="KW-0378">Hydrolase</keyword>
<keyword id="KW-0547">Nucleotide-binding</keyword>
<organism>
    <name type="scientific">Staphylococcus aureus (strain bovine RF122 / ET3-1)</name>
    <dbReference type="NCBI Taxonomy" id="273036"/>
    <lineage>
        <taxon>Bacteria</taxon>
        <taxon>Bacillati</taxon>
        <taxon>Bacillota</taxon>
        <taxon>Bacilli</taxon>
        <taxon>Bacillales</taxon>
        <taxon>Staphylococcaceae</taxon>
        <taxon>Staphylococcus</taxon>
    </lineage>
</organism>
<comment type="function">
    <text evidence="1">Catalyzes the cleavage of 5-oxoproline to form L-glutamate coupled to the hydrolysis of ATP to ADP and inorganic phosphate.</text>
</comment>
<comment type="catalytic activity">
    <reaction evidence="1">
        <text>5-oxo-L-proline + ATP + 2 H2O = L-glutamate + ADP + phosphate + H(+)</text>
        <dbReference type="Rhea" id="RHEA:10348"/>
        <dbReference type="ChEBI" id="CHEBI:15377"/>
        <dbReference type="ChEBI" id="CHEBI:15378"/>
        <dbReference type="ChEBI" id="CHEBI:29985"/>
        <dbReference type="ChEBI" id="CHEBI:30616"/>
        <dbReference type="ChEBI" id="CHEBI:43474"/>
        <dbReference type="ChEBI" id="CHEBI:58402"/>
        <dbReference type="ChEBI" id="CHEBI:456216"/>
        <dbReference type="EC" id="3.5.2.9"/>
    </reaction>
</comment>
<comment type="subunit">
    <text evidence="1">Forms a complex composed of PxpA, PxpB and PxpC.</text>
</comment>
<comment type="similarity">
    <text evidence="1">Belongs to the LamB/PxpA family.</text>
</comment>